<dbReference type="EMBL" id="CP000521">
    <property type="protein sequence ID" value="ABO12491.2"/>
    <property type="molecule type" value="Genomic_DNA"/>
</dbReference>
<dbReference type="RefSeq" id="WP_001024733.1">
    <property type="nucleotide sequence ID" value="NZ_CP053098.1"/>
</dbReference>
<dbReference type="PDB" id="7FIB">
    <property type="method" value="X-ray"/>
    <property type="resolution" value="2.10 A"/>
    <property type="chains" value="A/B=93-297"/>
</dbReference>
<dbReference type="PDB" id="8J4N">
    <property type="method" value="X-ray"/>
    <property type="resolution" value="2.23 A"/>
    <property type="chains" value="A/B=1-297"/>
</dbReference>
<dbReference type="PDB" id="8J4O">
    <property type="method" value="X-ray"/>
    <property type="resolution" value="1.97 A"/>
    <property type="chains" value="A/B=1-297"/>
</dbReference>
<dbReference type="PDBsum" id="7FIB"/>
<dbReference type="PDBsum" id="8J4N"/>
<dbReference type="PDBsum" id="8J4O"/>
<dbReference type="SMR" id="P0DUU5"/>
<dbReference type="KEGG" id="acb:A1S_2064"/>
<dbReference type="GO" id="GO:0005737">
    <property type="term" value="C:cytoplasm"/>
    <property type="evidence" value="ECO:0007669"/>
    <property type="project" value="UniProtKB-SubCell"/>
</dbReference>
<dbReference type="GO" id="GO:0003700">
    <property type="term" value="F:DNA-binding transcription factor activity"/>
    <property type="evidence" value="ECO:0007669"/>
    <property type="project" value="InterPro"/>
</dbReference>
<dbReference type="GO" id="GO:0000976">
    <property type="term" value="F:transcription cis-regulatory region binding"/>
    <property type="evidence" value="ECO:0007669"/>
    <property type="project" value="TreeGrafter"/>
</dbReference>
<dbReference type="CDD" id="cd05466">
    <property type="entry name" value="PBP2_LTTR_substrate"/>
    <property type="match status" value="1"/>
</dbReference>
<dbReference type="Gene3D" id="3.40.190.290">
    <property type="match status" value="1"/>
</dbReference>
<dbReference type="Gene3D" id="1.10.10.10">
    <property type="entry name" value="Winged helix-like DNA-binding domain superfamily/Winged helix DNA-binding domain"/>
    <property type="match status" value="1"/>
</dbReference>
<dbReference type="InterPro" id="IPR005119">
    <property type="entry name" value="LysR_subst-bd"/>
</dbReference>
<dbReference type="InterPro" id="IPR000847">
    <property type="entry name" value="Tscrpt_reg_HTH_LysR"/>
</dbReference>
<dbReference type="InterPro" id="IPR036388">
    <property type="entry name" value="WH-like_DNA-bd_sf"/>
</dbReference>
<dbReference type="InterPro" id="IPR036390">
    <property type="entry name" value="WH_DNA-bd_sf"/>
</dbReference>
<dbReference type="PANTHER" id="PTHR30126">
    <property type="entry name" value="HTH-TYPE TRANSCRIPTIONAL REGULATOR"/>
    <property type="match status" value="1"/>
</dbReference>
<dbReference type="PANTHER" id="PTHR30126:SF91">
    <property type="entry name" value="LYSR FAMILY TRANSCRIPTIONAL REGULATOR"/>
    <property type="match status" value="1"/>
</dbReference>
<dbReference type="Pfam" id="PF00126">
    <property type="entry name" value="HTH_1"/>
    <property type="match status" value="1"/>
</dbReference>
<dbReference type="Pfam" id="PF03466">
    <property type="entry name" value="LysR_substrate"/>
    <property type="match status" value="1"/>
</dbReference>
<dbReference type="SUPFAM" id="SSF53850">
    <property type="entry name" value="Periplasmic binding protein-like II"/>
    <property type="match status" value="1"/>
</dbReference>
<dbReference type="SUPFAM" id="SSF46785">
    <property type="entry name" value="Winged helix' DNA-binding domain"/>
    <property type="match status" value="1"/>
</dbReference>
<dbReference type="PROSITE" id="PS50931">
    <property type="entry name" value="HTH_LYSR"/>
    <property type="match status" value="1"/>
</dbReference>
<reference key="1">
    <citation type="journal article" date="2007" name="Genes Dev.">
        <title>New insights into Acinetobacter baumannii pathogenesis revealed by high-density pyrosequencing and transposon mutagenesis.</title>
        <authorList>
            <person name="Smith M.G."/>
            <person name="Gianoulis T.A."/>
            <person name="Pukatzki S."/>
            <person name="Mekalanos J.J."/>
            <person name="Ornston L.N."/>
            <person name="Gerstein M."/>
            <person name="Snyder M."/>
        </authorList>
    </citation>
    <scope>NUCLEOTIDE SEQUENCE [LARGE SCALE GENOMIC DNA]</scope>
    <source>
        <strain>ATCC 17978 / DSM 105126 / CIP 53.77 / LMG 1025 / NCDC KC755 / 5377</strain>
    </source>
</reference>
<reference key="2">
    <citation type="journal article" date="2018" name="J. Antimicrob. Chemother.">
        <title>Regulation of the aceI multidrug efflux pump gene in Acinetobacter baumannii.</title>
        <authorList>
            <person name="Liu Q."/>
            <person name="Hassan K.A."/>
            <person name="Ashwood H.E."/>
            <person name="Gamage H.K.A.H."/>
            <person name="Li L."/>
            <person name="Mabbutt B.C."/>
            <person name="Paulsen I.T."/>
        </authorList>
    </citation>
    <scope>FUNCTION</scope>
    <scope>DNA-BINDING</scope>
    <scope>DISRUPTION PHENOTYPE</scope>
    <source>
        <strain>ATCC 17978 / DSM 105126 / CIP 53.77 / LMG 1025 / NCDC KC755 / 5377</strain>
    </source>
</reference>
<reference key="3">
    <citation type="journal article" date="2020" name="Proc. Natl. Acad. Sci. U.S.A.">
        <title>Assembly and regulation of the chlorhexidine-specific efflux pump AceI.</title>
        <authorList>
            <person name="Bolla J.R."/>
            <person name="Howes A.C."/>
            <person name="Fiorentino F."/>
            <person name="Robinson C.V."/>
        </authorList>
    </citation>
    <scope>FUNCTION</scope>
    <scope>DNA-BINDING</scope>
    <scope>SUBUNIT</scope>
    <scope>DOMAIN</scope>
</reference>
<feature type="chain" id="PRO_0000453614" description="HTH-type transcriptional regulator AceR">
    <location>
        <begin position="1"/>
        <end position="297"/>
    </location>
</feature>
<feature type="domain" description="HTH lysR-type" evidence="1">
    <location>
        <begin position="1"/>
        <end position="60"/>
    </location>
</feature>
<feature type="DNA-binding region" description="H-T-H motif" evidence="1">
    <location>
        <begin position="20"/>
        <end position="39"/>
    </location>
</feature>
<feature type="strand" evidence="6">
    <location>
        <begin position="94"/>
        <end position="100"/>
    </location>
</feature>
<feature type="helix" evidence="6">
    <location>
        <begin position="101"/>
        <end position="103"/>
    </location>
</feature>
<feature type="helix" evidence="6">
    <location>
        <begin position="109"/>
        <end position="118"/>
    </location>
</feature>
<feature type="strand" evidence="6">
    <location>
        <begin position="123"/>
        <end position="129"/>
    </location>
</feature>
<feature type="helix" evidence="6">
    <location>
        <begin position="131"/>
        <end position="139"/>
    </location>
</feature>
<feature type="strand" evidence="6">
    <location>
        <begin position="144"/>
        <end position="149"/>
    </location>
</feature>
<feature type="strand" evidence="6">
    <location>
        <begin position="156"/>
        <end position="173"/>
    </location>
</feature>
<feature type="helix" evidence="6">
    <location>
        <begin position="177"/>
        <end position="180"/>
    </location>
</feature>
<feature type="strand" evidence="6">
    <location>
        <begin position="181"/>
        <end position="183"/>
    </location>
</feature>
<feature type="helix" evidence="6">
    <location>
        <begin position="186"/>
        <end position="190"/>
    </location>
</feature>
<feature type="strand" evidence="6">
    <location>
        <begin position="194"/>
        <end position="197"/>
    </location>
</feature>
<feature type="helix" evidence="6">
    <location>
        <begin position="201"/>
        <end position="203"/>
    </location>
</feature>
<feature type="helix" evidence="6">
    <location>
        <begin position="206"/>
        <end position="208"/>
    </location>
</feature>
<feature type="strand" evidence="6">
    <location>
        <begin position="211"/>
        <end position="219"/>
    </location>
</feature>
<feature type="helix" evidence="6">
    <location>
        <begin position="220"/>
        <end position="228"/>
    </location>
</feature>
<feature type="strand" evidence="6">
    <location>
        <begin position="233"/>
        <end position="237"/>
    </location>
</feature>
<feature type="helix" evidence="6">
    <location>
        <begin position="238"/>
        <end position="243"/>
    </location>
</feature>
<feature type="helix" evidence="6">
    <location>
        <begin position="247"/>
        <end position="250"/>
    </location>
</feature>
<feature type="strand" evidence="6">
    <location>
        <begin position="251"/>
        <end position="253"/>
    </location>
</feature>
<feature type="helix" evidence="6">
    <location>
        <begin position="255"/>
        <end position="257"/>
    </location>
</feature>
<feature type="strand" evidence="6">
    <location>
        <begin position="263"/>
        <end position="272"/>
    </location>
</feature>
<feature type="helix" evidence="6">
    <location>
        <begin position="279"/>
        <end position="291"/>
    </location>
</feature>
<organism>
    <name type="scientific">Acinetobacter baumannii (strain ATCC 17978 / DSM 105126 / CIP 53.77 / LMG 1025 / NCDC KC755 / 5377)</name>
    <dbReference type="NCBI Taxonomy" id="400667"/>
    <lineage>
        <taxon>Bacteria</taxon>
        <taxon>Pseudomonadati</taxon>
        <taxon>Pseudomonadota</taxon>
        <taxon>Gammaproteobacteria</taxon>
        <taxon>Moraxellales</taxon>
        <taxon>Moraxellaceae</taxon>
        <taxon>Acinetobacter</taxon>
        <taxon>Acinetobacter calcoaceticus/baumannii complex</taxon>
    </lineage>
</organism>
<name>ACER_ACIBT</name>
<keyword id="KW-0002">3D-structure</keyword>
<keyword id="KW-0010">Activator</keyword>
<keyword id="KW-0963">Cytoplasm</keyword>
<keyword id="KW-0238">DNA-binding</keyword>
<keyword id="KW-0678">Repressor</keyword>
<keyword id="KW-0804">Transcription</keyword>
<keyword id="KW-0805">Transcription regulation</keyword>
<sequence>MNINQEQLLMFQAVMETGSFSAAARKLGKVPSAVSMSIANLEIDLNLTLFERKGREPTPTAEARVLYEKTAQLLIEMNQWKQHAHALSTGLEPNLTIVVVSELLHTNWTDYVCLLESRFPDLQINIVSAPQEDALQMLLDGSAQLALMFEREHLDNREQFVELKREALIPVISKTHPLASQEHVSYEQILGTRQIVVASRDETLKPELLFSKHYWRTDNHHSACLMILRNLGWGVLPQEMFKENPELNNKLKALDVFDFTPRFEYYVDLVWSRESELGAAARFLIDYIRNKRMQPAP</sequence>
<accession>P0DUU5</accession>
<protein>
    <recommendedName>
        <fullName evidence="5">HTH-type transcriptional regulator AceR</fullName>
    </recommendedName>
</protein>
<gene>
    <name evidence="4" type="primary">aceR</name>
    <name type="ordered locus">A1S_2064</name>
</gene>
<proteinExistence type="evidence at protein level"/>
<comment type="function">
    <text evidence="2 3">Regulates the expression of the AceI transporter (PubMed:29481596). Binds DNA and chlorhexidine (PubMed:29481596, PubMed:32636271). Binds to regulatory sites within the intergenic region between the aceI and aceR genes, and affects the interaction between RNA polymerase (RNAP) and promoter DNA both in the presence and in the absence of chlorhexidine (PubMed:29481596, PubMed:32636271). In the absence of chlorhexidine, prevents transcription of the aceI gene by disrupting interactions between the promoter DNA and RNAP (PubMed:32636271). In the presence of chlorhexidine, activates expression of aceI (PubMed:29481596, PubMed:32636271). When AceR interacts with chlorhexidine, it undergoes a conformational change and the tetrameric form either releases the DNA or shifts the position of the DNA-binding region to allow RNAP to bind onto the promoter DNA to proceed with aceI transcription (PubMed:32636271).</text>
</comment>
<comment type="subunit">
    <text evidence="3">Homodimer and homotetramer (PubMed:32636271). Binding of chlorhexidine at the inducer-binding domain causes a quaternary structural change that favors interactions between dimers to form tetramers (PubMed:32636271).</text>
</comment>
<comment type="subcellular location">
    <subcellularLocation>
        <location evidence="5">Cytoplasm</location>
    </subcellularLocation>
</comment>
<comment type="domain">
    <text evidence="3">Binds DNA via its N-terminal domain and the inducer molecule via the C-terminal domain.</text>
</comment>
<comment type="disruption phenotype">
    <text evidence="2">Deletion mutant shows a decrease in chlorhexidine resistance.</text>
</comment>
<comment type="similarity">
    <text evidence="5">Belongs to the LysR transcriptional regulatory family.</text>
</comment>
<evidence type="ECO:0000255" key="1">
    <source>
        <dbReference type="PROSITE-ProRule" id="PRU00253"/>
    </source>
</evidence>
<evidence type="ECO:0000269" key="2">
    <source>
    </source>
</evidence>
<evidence type="ECO:0000269" key="3">
    <source>
    </source>
</evidence>
<evidence type="ECO:0000303" key="4">
    <source>
    </source>
</evidence>
<evidence type="ECO:0000305" key="5"/>
<evidence type="ECO:0007829" key="6">
    <source>
        <dbReference type="PDB" id="7FIB"/>
    </source>
</evidence>